<reference key="1">
    <citation type="journal article" date="2007" name="PLoS Genet.">
        <title>Patterns and implications of gene gain and loss in the evolution of Prochlorococcus.</title>
        <authorList>
            <person name="Kettler G.C."/>
            <person name="Martiny A.C."/>
            <person name="Huang K."/>
            <person name="Zucker J."/>
            <person name="Coleman M.L."/>
            <person name="Rodrigue S."/>
            <person name="Chen F."/>
            <person name="Lapidus A."/>
            <person name="Ferriera S."/>
            <person name="Johnson J."/>
            <person name="Steglich C."/>
            <person name="Church G.M."/>
            <person name="Richardson P."/>
            <person name="Chisholm S.W."/>
        </authorList>
    </citation>
    <scope>NUCLEOTIDE SEQUENCE [LARGE SCALE GENOMIC DNA]</scope>
    <source>
        <strain>MIT 9515</strain>
    </source>
</reference>
<comment type="function">
    <text evidence="1">Produces ATP from ADP in the presence of a proton gradient across the membrane.</text>
</comment>
<comment type="subunit">
    <text evidence="1">F-type ATPases have 2 components, CF(1) - the catalytic core - and CF(0) - the membrane proton channel. CF(1) has five subunits: alpha(3), beta(3), gamma(1), delta(1), epsilon(1). CF(0) has three main subunits: a, b and c.</text>
</comment>
<comment type="subcellular location">
    <subcellularLocation>
        <location evidence="1">Cellular thylakoid membrane</location>
        <topology evidence="1">Peripheral membrane protein</topology>
    </subcellularLocation>
</comment>
<comment type="similarity">
    <text evidence="1">Belongs to the ATPase epsilon chain family.</text>
</comment>
<proteinExistence type="inferred from homology"/>
<dbReference type="EMBL" id="CP000552">
    <property type="protein sequence ID" value="ABM72825.1"/>
    <property type="molecule type" value="Genomic_DNA"/>
</dbReference>
<dbReference type="RefSeq" id="WP_011820920.1">
    <property type="nucleotide sequence ID" value="NC_008817.1"/>
</dbReference>
<dbReference type="SMR" id="A2BYG4"/>
<dbReference type="STRING" id="167542.P9515_16181"/>
<dbReference type="GeneID" id="60202086"/>
<dbReference type="KEGG" id="pmc:P9515_16181"/>
<dbReference type="eggNOG" id="COG0355">
    <property type="taxonomic scope" value="Bacteria"/>
</dbReference>
<dbReference type="HOGENOM" id="CLU_084338_1_2_3"/>
<dbReference type="OrthoDB" id="9804110at2"/>
<dbReference type="Proteomes" id="UP000001589">
    <property type="component" value="Chromosome"/>
</dbReference>
<dbReference type="GO" id="GO:0031676">
    <property type="term" value="C:plasma membrane-derived thylakoid membrane"/>
    <property type="evidence" value="ECO:0007669"/>
    <property type="project" value="UniProtKB-SubCell"/>
</dbReference>
<dbReference type="GO" id="GO:0045259">
    <property type="term" value="C:proton-transporting ATP synthase complex"/>
    <property type="evidence" value="ECO:0007669"/>
    <property type="project" value="UniProtKB-KW"/>
</dbReference>
<dbReference type="GO" id="GO:0005524">
    <property type="term" value="F:ATP binding"/>
    <property type="evidence" value="ECO:0007669"/>
    <property type="project" value="UniProtKB-UniRule"/>
</dbReference>
<dbReference type="GO" id="GO:0046933">
    <property type="term" value="F:proton-transporting ATP synthase activity, rotational mechanism"/>
    <property type="evidence" value="ECO:0007669"/>
    <property type="project" value="UniProtKB-UniRule"/>
</dbReference>
<dbReference type="CDD" id="cd12152">
    <property type="entry name" value="F1-ATPase_delta"/>
    <property type="match status" value="1"/>
</dbReference>
<dbReference type="Gene3D" id="2.60.15.10">
    <property type="entry name" value="F0F1 ATP synthase delta/epsilon subunit, N-terminal"/>
    <property type="match status" value="1"/>
</dbReference>
<dbReference type="Gene3D" id="1.10.287.540">
    <property type="entry name" value="Helix hairpin bin"/>
    <property type="match status" value="1"/>
</dbReference>
<dbReference type="HAMAP" id="MF_00530">
    <property type="entry name" value="ATP_synth_epsil_bac"/>
    <property type="match status" value="1"/>
</dbReference>
<dbReference type="InterPro" id="IPR001469">
    <property type="entry name" value="ATP_synth_F1_dsu/esu"/>
</dbReference>
<dbReference type="InterPro" id="IPR020546">
    <property type="entry name" value="ATP_synth_F1_dsu/esu_N"/>
</dbReference>
<dbReference type="InterPro" id="IPR036771">
    <property type="entry name" value="ATPsynth_dsu/esu_N"/>
</dbReference>
<dbReference type="NCBIfam" id="TIGR01216">
    <property type="entry name" value="ATP_synt_epsi"/>
    <property type="match status" value="1"/>
</dbReference>
<dbReference type="PANTHER" id="PTHR13822">
    <property type="entry name" value="ATP SYNTHASE DELTA/EPSILON CHAIN"/>
    <property type="match status" value="1"/>
</dbReference>
<dbReference type="PANTHER" id="PTHR13822:SF10">
    <property type="entry name" value="ATP SYNTHASE EPSILON CHAIN, CHLOROPLASTIC"/>
    <property type="match status" value="1"/>
</dbReference>
<dbReference type="Pfam" id="PF02823">
    <property type="entry name" value="ATP-synt_DE_N"/>
    <property type="match status" value="1"/>
</dbReference>
<dbReference type="SUPFAM" id="SSF51344">
    <property type="entry name" value="Epsilon subunit of F1F0-ATP synthase N-terminal domain"/>
    <property type="match status" value="1"/>
</dbReference>
<gene>
    <name evidence="1" type="primary">atpC</name>
    <name type="ordered locus">P9515_16181</name>
</gene>
<protein>
    <recommendedName>
        <fullName evidence="1">ATP synthase epsilon chain</fullName>
    </recommendedName>
    <alternativeName>
        <fullName evidence="1">ATP synthase F1 sector epsilon subunit</fullName>
    </alternativeName>
    <alternativeName>
        <fullName evidence="1">F-ATPase epsilon subunit</fullName>
    </alternativeName>
</protein>
<keyword id="KW-0066">ATP synthesis</keyword>
<keyword id="KW-0139">CF(1)</keyword>
<keyword id="KW-0375">Hydrogen ion transport</keyword>
<keyword id="KW-0406">Ion transport</keyword>
<keyword id="KW-0472">Membrane</keyword>
<keyword id="KW-0793">Thylakoid</keyword>
<keyword id="KW-0813">Transport</keyword>
<accession>A2BYG4</accession>
<organism>
    <name type="scientific">Prochlorococcus marinus (strain MIT 9515)</name>
    <dbReference type="NCBI Taxonomy" id="167542"/>
    <lineage>
        <taxon>Bacteria</taxon>
        <taxon>Bacillati</taxon>
        <taxon>Cyanobacteriota</taxon>
        <taxon>Cyanophyceae</taxon>
        <taxon>Synechococcales</taxon>
        <taxon>Prochlorococcaceae</taxon>
        <taxon>Prochlorococcus</taxon>
    </lineage>
</organism>
<name>ATPE_PROM5</name>
<feature type="chain" id="PRO_1000056519" description="ATP synthase epsilon chain">
    <location>
        <begin position="1"/>
        <end position="134"/>
    </location>
</feature>
<sequence>MAISLKVLAPNQNVYEGDAEEVILPSTTGQIGVLPGHISLVTAIDIGVLRLRMNSKWTSIALMGGFAEIESDEVIVLVNSAEIGSEINTQNAEEALKKAKSAISKFPENEKSPEKIKALNEISKAEARFQASKN</sequence>
<evidence type="ECO:0000255" key="1">
    <source>
        <dbReference type="HAMAP-Rule" id="MF_00530"/>
    </source>
</evidence>